<reference evidence="9" key="1">
    <citation type="submission" date="2009-11" db="EMBL/GenBank/DDBJ databases">
        <authorList>
            <consortium name="Porcine genome sequencing project"/>
        </authorList>
    </citation>
    <scope>NUCLEOTIDE SEQUENCE [LARGE SCALE GENOMIC DNA]</scope>
    <source>
        <strain evidence="9">Duroc</strain>
    </source>
</reference>
<reference evidence="8" key="2">
    <citation type="journal article" date="2018" name="Eur. J. Pharmacol.">
        <title>Cloning and characterization of the porcine gastrin/cholecystokinin type 2 receptor.</title>
        <authorList>
            <person name="Bugge A."/>
            <person name="Jansen P.G."/>
            <person name="Maria L."/>
            <person name="Sanni S.J."/>
            <person name="Clausen T.R."/>
        </authorList>
    </citation>
    <scope>IDENTIFICATION</scope>
    <scope>FUNCTION</scope>
</reference>
<dbReference type="EMBL" id="AEMK02000068">
    <property type="status" value="NOT_ANNOTATED_CDS"/>
    <property type="molecule type" value="Genomic_DNA"/>
</dbReference>
<dbReference type="RefSeq" id="XP_020918009.1">
    <property type="nucleotide sequence ID" value="XM_021062350.1"/>
</dbReference>
<dbReference type="SMR" id="A0A287A2K5"/>
<dbReference type="FunCoup" id="A0A287A2K5">
    <property type="interactions" value="213"/>
</dbReference>
<dbReference type="STRING" id="9823.ENSSSCP00000037961"/>
<dbReference type="GlyCosmos" id="A0A287A2K5">
    <property type="glycosylation" value="3 sites, No reported glycans"/>
</dbReference>
<dbReference type="GlyGen" id="A0A287A2K5">
    <property type="glycosylation" value="5 sites"/>
</dbReference>
<dbReference type="PaxDb" id="9823-ENSSSCP00000015561"/>
<dbReference type="Ensembl" id="ENSSSCT00000058854.3">
    <property type="protein sequence ID" value="ENSSSCP00000037961.1"/>
    <property type="gene ID" value="ENSSSCG00000033806.3"/>
</dbReference>
<dbReference type="Ensembl" id="ENSSSCT00015098979.1">
    <property type="protein sequence ID" value="ENSSSCP00015040869.1"/>
    <property type="gene ID" value="ENSSSCG00015073549.1"/>
</dbReference>
<dbReference type="Ensembl" id="ENSSSCT00030005644.1">
    <property type="protein sequence ID" value="ENSSSCP00030002325.1"/>
    <property type="gene ID" value="ENSSSCG00030004277.1"/>
</dbReference>
<dbReference type="Ensembl" id="ENSSSCT00035075837.1">
    <property type="protein sequence ID" value="ENSSSCP00035030912.1"/>
    <property type="gene ID" value="ENSSSCG00035056757.1"/>
</dbReference>
<dbReference type="Ensembl" id="ENSSSCT00040047954.1">
    <property type="protein sequence ID" value="ENSSSCP00040020041.1"/>
    <property type="gene ID" value="ENSSSCG00040035698.1"/>
</dbReference>
<dbReference type="Ensembl" id="ENSSSCT00045045005.1">
    <property type="protein sequence ID" value="ENSSSCP00045031220.1"/>
    <property type="gene ID" value="ENSSSCG00045026416.1"/>
</dbReference>
<dbReference type="Ensembl" id="ENSSSCT00050095738.1">
    <property type="protein sequence ID" value="ENSSSCP00050041215.1"/>
    <property type="gene ID" value="ENSSSCG00050070220.1"/>
</dbReference>
<dbReference type="Ensembl" id="ENSSSCT00055042008.1">
    <property type="protein sequence ID" value="ENSSSCP00055033450.1"/>
    <property type="gene ID" value="ENSSSCG00055021358.1"/>
</dbReference>
<dbReference type="Ensembl" id="ENSSSCT00060035661.1">
    <property type="protein sequence ID" value="ENSSSCP00060015183.1"/>
    <property type="gene ID" value="ENSSSCG00060026336.1"/>
</dbReference>
<dbReference type="Ensembl" id="ENSSSCT00065109109.1">
    <property type="protein sequence ID" value="ENSSSCP00065048957.1"/>
    <property type="gene ID" value="ENSSSCG00065078630.1"/>
</dbReference>
<dbReference type="Ensembl" id="ENSSSCT00070000706.1">
    <property type="protein sequence ID" value="ENSSSCP00070000617.1"/>
    <property type="gene ID" value="ENSSSCG00070000383.1"/>
</dbReference>
<dbReference type="Ensembl" id="ENSSSCT00105016243">
    <property type="protein sequence ID" value="ENSSSCP00105011516"/>
    <property type="gene ID" value="ENSSSCG00105008158"/>
</dbReference>
<dbReference type="Ensembl" id="ENSSSCT00110044903">
    <property type="protein sequence ID" value="ENSSSCP00110031727"/>
    <property type="gene ID" value="ENSSSCG00110023159"/>
</dbReference>
<dbReference type="Ensembl" id="ENSSSCT00130049822">
    <property type="protein sequence ID" value="ENSSSCP00130035377"/>
    <property type="gene ID" value="ENSSSCG00130025616"/>
</dbReference>
<dbReference type="GeneID" id="100625698"/>
<dbReference type="eggNOG" id="KOG3656">
    <property type="taxonomic scope" value="Eukaryota"/>
</dbReference>
<dbReference type="GeneTree" id="ENSGT01120000271823"/>
<dbReference type="InParanoid" id="A0A287A2K5"/>
<dbReference type="OMA" id="GCYVNLL"/>
<dbReference type="OrthoDB" id="5987936at2759"/>
<dbReference type="Proteomes" id="UP000008227">
    <property type="component" value="Chromosome 9"/>
</dbReference>
<dbReference type="Proteomes" id="UP000314985">
    <property type="component" value="Chromosome 9"/>
</dbReference>
<dbReference type="Proteomes" id="UP000694570">
    <property type="component" value="Unplaced"/>
</dbReference>
<dbReference type="Proteomes" id="UP000694571">
    <property type="component" value="Unplaced"/>
</dbReference>
<dbReference type="Proteomes" id="UP000694720">
    <property type="component" value="Unplaced"/>
</dbReference>
<dbReference type="Proteomes" id="UP000694722">
    <property type="component" value="Unplaced"/>
</dbReference>
<dbReference type="Proteomes" id="UP000694723">
    <property type="component" value="Unplaced"/>
</dbReference>
<dbReference type="Proteomes" id="UP000694724">
    <property type="component" value="Unplaced"/>
</dbReference>
<dbReference type="Proteomes" id="UP000694725">
    <property type="component" value="Unplaced"/>
</dbReference>
<dbReference type="Proteomes" id="UP000694726">
    <property type="component" value="Unplaced"/>
</dbReference>
<dbReference type="Proteomes" id="UP000694727">
    <property type="component" value="Unplaced"/>
</dbReference>
<dbReference type="Proteomes" id="UP000694728">
    <property type="component" value="Unplaced"/>
</dbReference>
<dbReference type="Bgee" id="ENSSSCG00000033806">
    <property type="expression patterns" value="Expressed in frontal cortex and 9 other cell types or tissues"/>
</dbReference>
<dbReference type="ExpressionAtlas" id="A0A287A2K5">
    <property type="expression patterns" value="baseline"/>
</dbReference>
<dbReference type="GO" id="GO:0005886">
    <property type="term" value="C:plasma membrane"/>
    <property type="evidence" value="ECO:0000318"/>
    <property type="project" value="GO_Central"/>
</dbReference>
<dbReference type="GO" id="GO:0004930">
    <property type="term" value="F:G protein-coupled receptor activity"/>
    <property type="evidence" value="ECO:0000318"/>
    <property type="project" value="GO_Central"/>
</dbReference>
<dbReference type="GO" id="GO:0015054">
    <property type="term" value="F:gastrin receptor activity"/>
    <property type="evidence" value="ECO:0007669"/>
    <property type="project" value="InterPro"/>
</dbReference>
<dbReference type="GO" id="GO:0032870">
    <property type="term" value="P:cellular response to hormone stimulus"/>
    <property type="evidence" value="ECO:0000318"/>
    <property type="project" value="GO_Central"/>
</dbReference>
<dbReference type="GO" id="GO:0007186">
    <property type="term" value="P:G protein-coupled receptor signaling pathway"/>
    <property type="evidence" value="ECO:0000318"/>
    <property type="project" value="GO_Central"/>
</dbReference>
<dbReference type="Gene3D" id="1.20.1070.10">
    <property type="entry name" value="Rhodopsin 7-helix transmembrane proteins"/>
    <property type="match status" value="1"/>
</dbReference>
<dbReference type="InterPro" id="IPR009126">
    <property type="entry name" value="Cholcskin_rcpt"/>
</dbReference>
<dbReference type="InterPro" id="IPR000314">
    <property type="entry name" value="Gastrin_rcpt"/>
</dbReference>
<dbReference type="InterPro" id="IPR000276">
    <property type="entry name" value="GPCR_Rhodpsn"/>
</dbReference>
<dbReference type="InterPro" id="IPR017452">
    <property type="entry name" value="GPCR_Rhodpsn_7TM"/>
</dbReference>
<dbReference type="PANTHER" id="PTHR24243">
    <property type="entry name" value="G-PROTEIN COUPLED RECEPTOR"/>
    <property type="match status" value="1"/>
</dbReference>
<dbReference type="PANTHER" id="PTHR24243:SF45">
    <property type="entry name" value="GASTRIN_CHOLECYSTOKININ TYPE B RECEPTOR"/>
    <property type="match status" value="1"/>
</dbReference>
<dbReference type="Pfam" id="PF00001">
    <property type="entry name" value="7tm_1"/>
    <property type="match status" value="1"/>
</dbReference>
<dbReference type="PRINTS" id="PR01822">
    <property type="entry name" value="CCYSTOKININR"/>
</dbReference>
<dbReference type="PRINTS" id="PR00527">
    <property type="entry name" value="GASTRINR"/>
</dbReference>
<dbReference type="PRINTS" id="PR00237">
    <property type="entry name" value="GPCRRHODOPSN"/>
</dbReference>
<dbReference type="SUPFAM" id="SSF81321">
    <property type="entry name" value="Family A G protein-coupled receptor-like"/>
    <property type="match status" value="1"/>
</dbReference>
<dbReference type="PROSITE" id="PS00237">
    <property type="entry name" value="G_PROTEIN_RECEP_F1_1"/>
    <property type="match status" value="1"/>
</dbReference>
<dbReference type="PROSITE" id="PS50262">
    <property type="entry name" value="G_PROTEIN_RECEP_F1_2"/>
    <property type="match status" value="1"/>
</dbReference>
<protein>
    <recommendedName>
        <fullName evidence="2">Gastrin/cholecystokinin type B receptor</fullName>
        <shortName evidence="2">CCK-B receptor</shortName>
        <shortName evidence="8">CCK-BR</shortName>
    </recommendedName>
    <alternativeName>
        <fullName evidence="2">Cholecystokinin-2 receptor</fullName>
        <shortName evidence="8">CCK2-R</shortName>
    </alternativeName>
</protein>
<keyword id="KW-1003">Cell membrane</keyword>
<keyword id="KW-1015">Disulfide bond</keyword>
<keyword id="KW-0297">G-protein coupled receptor</keyword>
<keyword id="KW-0325">Glycoprotein</keyword>
<keyword id="KW-0449">Lipoprotein</keyword>
<keyword id="KW-0472">Membrane</keyword>
<keyword id="KW-0564">Palmitate</keyword>
<keyword id="KW-0675">Receptor</keyword>
<keyword id="KW-1185">Reference proteome</keyword>
<keyword id="KW-0807">Transducer</keyword>
<keyword id="KW-0812">Transmembrane</keyword>
<keyword id="KW-1133">Transmembrane helix</keyword>
<evidence type="ECO:0000250" key="1">
    <source>
        <dbReference type="UniProtKB" id="P17124"/>
    </source>
</evidence>
<evidence type="ECO:0000250" key="2">
    <source>
        <dbReference type="UniProtKB" id="P32239"/>
    </source>
</evidence>
<evidence type="ECO:0000255" key="3"/>
<evidence type="ECO:0000255" key="4">
    <source>
        <dbReference type="PROSITE-ProRule" id="PRU00521"/>
    </source>
</evidence>
<evidence type="ECO:0000255" key="5">
    <source>
        <dbReference type="RuleBase" id="RU000688"/>
    </source>
</evidence>
<evidence type="ECO:0000256" key="6">
    <source>
        <dbReference type="SAM" id="MobiDB-lite"/>
    </source>
</evidence>
<evidence type="ECO:0000269" key="7">
    <source>
    </source>
</evidence>
<evidence type="ECO:0000305" key="8"/>
<evidence type="ECO:0000312" key="9">
    <source>
        <dbReference type="Proteomes" id="UP000008227"/>
    </source>
</evidence>
<feature type="chain" id="PRO_0000445193" description="Gastrin/cholecystokinin type B receptor">
    <location>
        <begin position="1"/>
        <end position="452"/>
    </location>
</feature>
<feature type="topological domain" description="Extracellular" evidence="8">
    <location>
        <begin position="1"/>
        <end position="57"/>
    </location>
</feature>
<feature type="transmembrane region" description="Helical; Name=1" evidence="3">
    <location>
        <begin position="58"/>
        <end position="78"/>
    </location>
</feature>
<feature type="topological domain" description="Cytoplasmic" evidence="8">
    <location>
        <begin position="79"/>
        <end position="99"/>
    </location>
</feature>
<feature type="transmembrane region" description="Helical; Name=2" evidence="3">
    <location>
        <begin position="100"/>
        <end position="120"/>
    </location>
</feature>
<feature type="topological domain" description="Extracellular" evidence="8">
    <location>
        <begin position="121"/>
        <end position="127"/>
    </location>
</feature>
<feature type="transmembrane region" description="Helical; Name=3" evidence="3">
    <location>
        <begin position="128"/>
        <end position="148"/>
    </location>
</feature>
<feature type="topological domain" description="Cytoplasmic" evidence="8">
    <location>
        <begin position="149"/>
        <end position="171"/>
    </location>
</feature>
<feature type="transmembrane region" description="Helical; Name=4" evidence="3">
    <location>
        <begin position="172"/>
        <end position="192"/>
    </location>
</feature>
<feature type="topological domain" description="Extracellular" evidence="8">
    <location>
        <begin position="193"/>
        <end position="218"/>
    </location>
</feature>
<feature type="transmembrane region" description="Helical; Name=5" evidence="3">
    <location>
        <begin position="219"/>
        <end position="239"/>
    </location>
</feature>
<feature type="topological domain" description="Cytoplasmic" evidence="8">
    <location>
        <begin position="240"/>
        <end position="339"/>
    </location>
</feature>
<feature type="transmembrane region" description="Helical; Name=6" evidence="3">
    <location>
        <begin position="340"/>
        <end position="360"/>
    </location>
</feature>
<feature type="topological domain" description="Extracellular" evidence="8">
    <location>
        <begin position="361"/>
        <end position="376"/>
    </location>
</feature>
<feature type="transmembrane region" description="Helical; Name=7" evidence="3">
    <location>
        <begin position="377"/>
        <end position="397"/>
    </location>
</feature>
<feature type="topological domain" description="Cytoplasmic" evidence="8">
    <location>
        <begin position="398"/>
        <end position="452"/>
    </location>
</feature>
<feature type="region of interest" description="Disordered" evidence="6">
    <location>
        <begin position="256"/>
        <end position="285"/>
    </location>
</feature>
<feature type="compositionally biased region" description="Gly residues" evidence="6">
    <location>
        <begin position="263"/>
        <end position="273"/>
    </location>
</feature>
<feature type="lipid moiety-binding region" description="S-palmitoyl cysteine" evidence="1">
    <location>
        <position position="413"/>
    </location>
</feature>
<feature type="glycosylation site" description="N-linked (GlcNAc...) asparagine" evidence="3">
    <location>
        <position position="7"/>
    </location>
</feature>
<feature type="glycosylation site" description="N-linked (GlcNAc...) asparagine" evidence="3">
    <location>
        <position position="28"/>
    </location>
</feature>
<feature type="glycosylation site" description="N-linked (GlcNAc...) asparagine" evidence="3">
    <location>
        <position position="34"/>
    </location>
</feature>
<feature type="disulfide bond" evidence="4">
    <location>
        <begin position="125"/>
        <end position="203"/>
    </location>
</feature>
<gene>
    <name evidence="2" type="primary">CCKBR</name>
</gene>
<accession>A0A287A2K5</accession>
<name>GASR_PIG</name>
<proteinExistence type="inferred from homology"/>
<organism evidence="9">
    <name type="scientific">Sus scrofa</name>
    <name type="common">Pig</name>
    <dbReference type="NCBI Taxonomy" id="9823"/>
    <lineage>
        <taxon>Eukaryota</taxon>
        <taxon>Metazoa</taxon>
        <taxon>Chordata</taxon>
        <taxon>Craniata</taxon>
        <taxon>Vertebrata</taxon>
        <taxon>Euteleostomi</taxon>
        <taxon>Mammalia</taxon>
        <taxon>Eutheria</taxon>
        <taxon>Laurasiatheria</taxon>
        <taxon>Artiodactyla</taxon>
        <taxon>Suina</taxon>
        <taxon>Suidae</taxon>
        <taxon>Sus</taxon>
    </lineage>
</organism>
<comment type="function">
    <text evidence="7 8">Receptor for gastrin and cholecystokinin (PubMed:29920282). The CCK-B receptors occur throughout the central nervous system where they modulate anxiety, analgesia, arousal, and neuroleptic activity (Probable). This receptor mediates its action by association with G proteins that activate a phosphatidylinositol-calcium second messenger system (Probable).</text>
</comment>
<comment type="subcellular location">
    <subcellularLocation>
        <location evidence="8">Cell membrane</location>
        <topology evidence="3">Multi-pass membrane protein</topology>
    </subcellularLocation>
</comment>
<comment type="similarity">
    <text evidence="4 5">Belongs to the G-protein coupled receptor 1 family.</text>
</comment>
<sequence length="452" mass="48613">MELLKLNRSLPGPGPGAALCRPEGPLLNGSGAGNLSCEPPRIRGAGTRELELAVRITLYAAIFLMSVAGNVLIIVVLGLSRRLRTVTNAFLLSLAVSDLLLAVACMPFTLLPNLMGTFIFGTVVCKAVSYFMGVSVSVSTLSLVAIALERYSAICRPLQARVWQTRSHAARVIVATWMLSGLLMVPYPVYTAVQPAGPRVLQCMHRWPSARIRQTWSVLLLLLLFFVPGVVMAVAYGLISRELYLGLRFDGDSDCESQSQVGSQGGLPGGAGQGPAHPNGHCRSETRLAGEDGDGCYVQLPRSRPALEMSALTAPTPGPGSGPRPAQAKLLAKKRVVRMLLVIVVLFFLCWLPVYSANTWRAFDGPGAHRALSGAPISFIHLLSYASACVNPLVYCFMHRRFRQACLDTCARCCPRPPRARPRPLPDEDPPTPSIASLSRLSYTTISTLGPG</sequence>